<name>EFG_CLOD6</name>
<proteinExistence type="inferred from homology"/>
<protein>
    <recommendedName>
        <fullName evidence="1">Elongation factor G</fullName>
        <shortName evidence="1">EF-G</shortName>
    </recommendedName>
</protein>
<evidence type="ECO:0000255" key="1">
    <source>
        <dbReference type="HAMAP-Rule" id="MF_00054"/>
    </source>
</evidence>
<gene>
    <name evidence="1" type="primary">fusA</name>
    <name type="ordered locus">CD630_00700</name>
</gene>
<comment type="function">
    <text evidence="1">Catalyzes the GTP-dependent ribosomal translocation step during translation elongation. During this step, the ribosome changes from the pre-translocational (PRE) to the post-translocational (POST) state as the newly formed A-site-bound peptidyl-tRNA and P-site-bound deacylated tRNA move to the P and E sites, respectively. Catalyzes the coordinated movement of the two tRNA molecules, the mRNA and conformational changes in the ribosome.</text>
</comment>
<comment type="subcellular location">
    <subcellularLocation>
        <location evidence="1">Cytoplasm</location>
    </subcellularLocation>
</comment>
<comment type="similarity">
    <text evidence="1">Belongs to the TRAFAC class translation factor GTPase superfamily. Classic translation factor GTPase family. EF-G/EF-2 subfamily.</text>
</comment>
<keyword id="KW-0963">Cytoplasm</keyword>
<keyword id="KW-0251">Elongation factor</keyword>
<keyword id="KW-0342">GTP-binding</keyword>
<keyword id="KW-0547">Nucleotide-binding</keyword>
<keyword id="KW-0648">Protein biosynthesis</keyword>
<keyword id="KW-1185">Reference proteome</keyword>
<organism>
    <name type="scientific">Clostridioides difficile (strain 630)</name>
    <name type="common">Peptoclostridium difficile</name>
    <dbReference type="NCBI Taxonomy" id="272563"/>
    <lineage>
        <taxon>Bacteria</taxon>
        <taxon>Bacillati</taxon>
        <taxon>Bacillota</taxon>
        <taxon>Clostridia</taxon>
        <taxon>Peptostreptococcales</taxon>
        <taxon>Peptostreptococcaceae</taxon>
        <taxon>Clostridioides</taxon>
    </lineage>
</organism>
<reference key="1">
    <citation type="journal article" date="2006" name="Nat. Genet.">
        <title>The multidrug-resistant human pathogen Clostridium difficile has a highly mobile, mosaic genome.</title>
        <authorList>
            <person name="Sebaihia M."/>
            <person name="Wren B.W."/>
            <person name="Mullany P."/>
            <person name="Fairweather N.F."/>
            <person name="Minton N."/>
            <person name="Stabler R."/>
            <person name="Thomson N.R."/>
            <person name="Roberts A.P."/>
            <person name="Cerdeno-Tarraga A.M."/>
            <person name="Wang H."/>
            <person name="Holden M.T.G."/>
            <person name="Wright A."/>
            <person name="Churcher C."/>
            <person name="Quail M.A."/>
            <person name="Baker S."/>
            <person name="Bason N."/>
            <person name="Brooks K."/>
            <person name="Chillingworth T."/>
            <person name="Cronin A."/>
            <person name="Davis P."/>
            <person name="Dowd L."/>
            <person name="Fraser A."/>
            <person name="Feltwell T."/>
            <person name="Hance Z."/>
            <person name="Holroyd S."/>
            <person name="Jagels K."/>
            <person name="Moule S."/>
            <person name="Mungall K."/>
            <person name="Price C."/>
            <person name="Rabbinowitsch E."/>
            <person name="Sharp S."/>
            <person name="Simmonds M."/>
            <person name="Stevens K."/>
            <person name="Unwin L."/>
            <person name="Whithead S."/>
            <person name="Dupuy B."/>
            <person name="Dougan G."/>
            <person name="Barrell B."/>
            <person name="Parkhill J."/>
        </authorList>
    </citation>
    <scope>NUCLEOTIDE SEQUENCE [LARGE SCALE GENOMIC DNA]</scope>
    <source>
        <strain>630</strain>
    </source>
</reference>
<dbReference type="EMBL" id="AM180355">
    <property type="protein sequence ID" value="CAJ66885.1"/>
    <property type="molecule type" value="Genomic_DNA"/>
</dbReference>
<dbReference type="RefSeq" id="WP_003436178.1">
    <property type="nucleotide sequence ID" value="NZ_JAUPES010000049.1"/>
</dbReference>
<dbReference type="RefSeq" id="YP_001086534.1">
    <property type="nucleotide sequence ID" value="NC_009089.1"/>
</dbReference>
<dbReference type="SMR" id="Q18CF4"/>
<dbReference type="STRING" id="272563.CD630_00700"/>
<dbReference type="EnsemblBacteria" id="CAJ66885">
    <property type="protein sequence ID" value="CAJ66885"/>
    <property type="gene ID" value="CD630_00700"/>
</dbReference>
<dbReference type="GeneID" id="66352568"/>
<dbReference type="KEGG" id="cdf:CD630_00700"/>
<dbReference type="KEGG" id="pdc:CDIF630_00136"/>
<dbReference type="PATRIC" id="fig|272563.120.peg.76"/>
<dbReference type="eggNOG" id="COG0480">
    <property type="taxonomic scope" value="Bacteria"/>
</dbReference>
<dbReference type="OrthoDB" id="9804431at2"/>
<dbReference type="PhylomeDB" id="Q18CF4"/>
<dbReference type="BioCyc" id="PDIF272563:G12WB-124-MONOMER"/>
<dbReference type="Proteomes" id="UP000001978">
    <property type="component" value="Chromosome"/>
</dbReference>
<dbReference type="GO" id="GO:0005737">
    <property type="term" value="C:cytoplasm"/>
    <property type="evidence" value="ECO:0007669"/>
    <property type="project" value="UniProtKB-SubCell"/>
</dbReference>
<dbReference type="GO" id="GO:0005525">
    <property type="term" value="F:GTP binding"/>
    <property type="evidence" value="ECO:0007669"/>
    <property type="project" value="UniProtKB-UniRule"/>
</dbReference>
<dbReference type="GO" id="GO:0003924">
    <property type="term" value="F:GTPase activity"/>
    <property type="evidence" value="ECO:0007669"/>
    <property type="project" value="InterPro"/>
</dbReference>
<dbReference type="GO" id="GO:0003746">
    <property type="term" value="F:translation elongation factor activity"/>
    <property type="evidence" value="ECO:0007669"/>
    <property type="project" value="UniProtKB-UniRule"/>
</dbReference>
<dbReference type="GO" id="GO:0032790">
    <property type="term" value="P:ribosome disassembly"/>
    <property type="evidence" value="ECO:0007669"/>
    <property type="project" value="TreeGrafter"/>
</dbReference>
<dbReference type="CDD" id="cd01886">
    <property type="entry name" value="EF-G"/>
    <property type="match status" value="1"/>
</dbReference>
<dbReference type="CDD" id="cd16262">
    <property type="entry name" value="EFG_III"/>
    <property type="match status" value="1"/>
</dbReference>
<dbReference type="CDD" id="cd01434">
    <property type="entry name" value="EFG_mtEFG1_IV"/>
    <property type="match status" value="1"/>
</dbReference>
<dbReference type="CDD" id="cd03713">
    <property type="entry name" value="EFG_mtEFG_C"/>
    <property type="match status" value="1"/>
</dbReference>
<dbReference type="CDD" id="cd04088">
    <property type="entry name" value="EFG_mtEFG_II"/>
    <property type="match status" value="1"/>
</dbReference>
<dbReference type="FunFam" id="2.40.30.10:FF:000006">
    <property type="entry name" value="Elongation factor G"/>
    <property type="match status" value="1"/>
</dbReference>
<dbReference type="FunFam" id="3.30.230.10:FF:000003">
    <property type="entry name" value="Elongation factor G"/>
    <property type="match status" value="1"/>
</dbReference>
<dbReference type="FunFam" id="3.30.70.240:FF:000001">
    <property type="entry name" value="Elongation factor G"/>
    <property type="match status" value="1"/>
</dbReference>
<dbReference type="FunFam" id="3.30.70.870:FF:000001">
    <property type="entry name" value="Elongation factor G"/>
    <property type="match status" value="1"/>
</dbReference>
<dbReference type="FunFam" id="3.40.50.300:FF:000029">
    <property type="entry name" value="Elongation factor G"/>
    <property type="match status" value="1"/>
</dbReference>
<dbReference type="Gene3D" id="3.30.230.10">
    <property type="match status" value="1"/>
</dbReference>
<dbReference type="Gene3D" id="3.30.70.240">
    <property type="match status" value="1"/>
</dbReference>
<dbReference type="Gene3D" id="3.30.70.870">
    <property type="entry name" value="Elongation Factor G (Translational Gtpase), domain 3"/>
    <property type="match status" value="1"/>
</dbReference>
<dbReference type="Gene3D" id="3.40.50.300">
    <property type="entry name" value="P-loop containing nucleotide triphosphate hydrolases"/>
    <property type="match status" value="1"/>
</dbReference>
<dbReference type="Gene3D" id="2.40.30.10">
    <property type="entry name" value="Translation factors"/>
    <property type="match status" value="1"/>
</dbReference>
<dbReference type="HAMAP" id="MF_00054_B">
    <property type="entry name" value="EF_G_EF_2_B"/>
    <property type="match status" value="1"/>
</dbReference>
<dbReference type="InterPro" id="IPR053905">
    <property type="entry name" value="EF-G-like_DII"/>
</dbReference>
<dbReference type="InterPro" id="IPR041095">
    <property type="entry name" value="EFG_II"/>
</dbReference>
<dbReference type="InterPro" id="IPR009022">
    <property type="entry name" value="EFG_III"/>
</dbReference>
<dbReference type="InterPro" id="IPR035647">
    <property type="entry name" value="EFG_III/V"/>
</dbReference>
<dbReference type="InterPro" id="IPR047872">
    <property type="entry name" value="EFG_IV"/>
</dbReference>
<dbReference type="InterPro" id="IPR035649">
    <property type="entry name" value="EFG_V"/>
</dbReference>
<dbReference type="InterPro" id="IPR000640">
    <property type="entry name" value="EFG_V-like"/>
</dbReference>
<dbReference type="InterPro" id="IPR031157">
    <property type="entry name" value="G_TR_CS"/>
</dbReference>
<dbReference type="InterPro" id="IPR027417">
    <property type="entry name" value="P-loop_NTPase"/>
</dbReference>
<dbReference type="InterPro" id="IPR020568">
    <property type="entry name" value="Ribosomal_Su5_D2-typ_SF"/>
</dbReference>
<dbReference type="InterPro" id="IPR014721">
    <property type="entry name" value="Ribsml_uS5_D2-typ_fold_subgr"/>
</dbReference>
<dbReference type="InterPro" id="IPR005225">
    <property type="entry name" value="Small_GTP-bd"/>
</dbReference>
<dbReference type="InterPro" id="IPR000795">
    <property type="entry name" value="T_Tr_GTP-bd_dom"/>
</dbReference>
<dbReference type="InterPro" id="IPR009000">
    <property type="entry name" value="Transl_B-barrel_sf"/>
</dbReference>
<dbReference type="InterPro" id="IPR004540">
    <property type="entry name" value="Transl_elong_EFG/EF2"/>
</dbReference>
<dbReference type="InterPro" id="IPR005517">
    <property type="entry name" value="Transl_elong_EFG/EF2_IV"/>
</dbReference>
<dbReference type="NCBIfam" id="TIGR00484">
    <property type="entry name" value="EF-G"/>
    <property type="match status" value="1"/>
</dbReference>
<dbReference type="NCBIfam" id="NF009379">
    <property type="entry name" value="PRK12740.1-3"/>
    <property type="match status" value="1"/>
</dbReference>
<dbReference type="NCBIfam" id="NF009381">
    <property type="entry name" value="PRK12740.1-5"/>
    <property type="match status" value="1"/>
</dbReference>
<dbReference type="NCBIfam" id="TIGR00231">
    <property type="entry name" value="small_GTP"/>
    <property type="match status" value="1"/>
</dbReference>
<dbReference type="PANTHER" id="PTHR43261:SF1">
    <property type="entry name" value="RIBOSOME-RELEASING FACTOR 2, MITOCHONDRIAL"/>
    <property type="match status" value="1"/>
</dbReference>
<dbReference type="PANTHER" id="PTHR43261">
    <property type="entry name" value="TRANSLATION ELONGATION FACTOR G-RELATED"/>
    <property type="match status" value="1"/>
</dbReference>
<dbReference type="Pfam" id="PF22042">
    <property type="entry name" value="EF-G_D2"/>
    <property type="match status" value="1"/>
</dbReference>
<dbReference type="Pfam" id="PF00679">
    <property type="entry name" value="EFG_C"/>
    <property type="match status" value="1"/>
</dbReference>
<dbReference type="Pfam" id="PF14492">
    <property type="entry name" value="EFG_III"/>
    <property type="match status" value="1"/>
</dbReference>
<dbReference type="Pfam" id="PF03764">
    <property type="entry name" value="EFG_IV"/>
    <property type="match status" value="1"/>
</dbReference>
<dbReference type="Pfam" id="PF00009">
    <property type="entry name" value="GTP_EFTU"/>
    <property type="match status" value="1"/>
</dbReference>
<dbReference type="PRINTS" id="PR00315">
    <property type="entry name" value="ELONGATNFCT"/>
</dbReference>
<dbReference type="SMART" id="SM00838">
    <property type="entry name" value="EFG_C"/>
    <property type="match status" value="1"/>
</dbReference>
<dbReference type="SMART" id="SM00889">
    <property type="entry name" value="EFG_IV"/>
    <property type="match status" value="1"/>
</dbReference>
<dbReference type="SUPFAM" id="SSF54980">
    <property type="entry name" value="EF-G C-terminal domain-like"/>
    <property type="match status" value="2"/>
</dbReference>
<dbReference type="SUPFAM" id="SSF52540">
    <property type="entry name" value="P-loop containing nucleoside triphosphate hydrolases"/>
    <property type="match status" value="1"/>
</dbReference>
<dbReference type="SUPFAM" id="SSF54211">
    <property type="entry name" value="Ribosomal protein S5 domain 2-like"/>
    <property type="match status" value="1"/>
</dbReference>
<dbReference type="SUPFAM" id="SSF50447">
    <property type="entry name" value="Translation proteins"/>
    <property type="match status" value="1"/>
</dbReference>
<dbReference type="PROSITE" id="PS00301">
    <property type="entry name" value="G_TR_1"/>
    <property type="match status" value="1"/>
</dbReference>
<dbReference type="PROSITE" id="PS51722">
    <property type="entry name" value="G_TR_2"/>
    <property type="match status" value="1"/>
</dbReference>
<accession>Q18CF4</accession>
<sequence>MARKFPLERTRNIGIMAHIDAGKTTTTERILFYTGQTHKIGETHEGASQMDWMEQEKERGITITSAATTASWKDHRINIIDTPGHVDFTVEVERSLRVLDGSVAVFCAKGGVEPQSENVWRQAETYGVPRIAFVNKMDILGADFYNVVSMMKSRLNSNAVPMQLPIGKEDSFIGIIDLLKMDAVIYKDDLGVEMEETDIPEDMKELAAEWREKLVESVAETDEELMMKYLEGEELTIDELKVAIRKATIACEMNPVFCGTAYRNKGVQLVIDAVLDYLPAPTDIPAIKGILADGEEAERHSSDEEPFSALAFKIMTDPFVGKLAFFRVYSGTLESGSYVLNATKNKRERIGRILQMHANTREEITKVYAGDIAAAVGLKDTTTGDTLCDPANPIILESMEFPEPVISVAIEPSSKAAQEKMGIALQKLAEEDPTFTVKTDQETGQTIISGMGELHLEIIVDRLLREFKVEAKVGAPQVAYRETITQPVDVEYKYSKQSGGRGQYGHVKIRVAPQEPGEGYKFTNKTVGGSVPKEYVGPVDMGIQGAMQSGIVAGYPVVDVAVELYDGSYHEVDSSEMAFKMAGSMAFKDAMKKGNAVLLEPYFKVEVVTPEDYMGDVMGDLNSRRGLIQGMEARSGAQVINAFVPLSEMFGYSTDLRSSTQGRATYTMIFDHYEQVPASVAKKIAEGK</sequence>
<feature type="chain" id="PRO_0000263441" description="Elongation factor G">
    <location>
        <begin position="1"/>
        <end position="688"/>
    </location>
</feature>
<feature type="domain" description="tr-type G">
    <location>
        <begin position="8"/>
        <end position="282"/>
    </location>
</feature>
<feature type="binding site" evidence="1">
    <location>
        <begin position="17"/>
        <end position="24"/>
    </location>
    <ligand>
        <name>GTP</name>
        <dbReference type="ChEBI" id="CHEBI:37565"/>
    </ligand>
</feature>
<feature type="binding site" evidence="1">
    <location>
        <begin position="81"/>
        <end position="85"/>
    </location>
    <ligand>
        <name>GTP</name>
        <dbReference type="ChEBI" id="CHEBI:37565"/>
    </ligand>
</feature>
<feature type="binding site" evidence="1">
    <location>
        <begin position="135"/>
        <end position="138"/>
    </location>
    <ligand>
        <name>GTP</name>
        <dbReference type="ChEBI" id="CHEBI:37565"/>
    </ligand>
</feature>